<proteinExistence type="inferred from homology"/>
<dbReference type="EMBL" id="CP000412">
    <property type="protein sequence ID" value="ABJ57705.1"/>
    <property type="molecule type" value="Genomic_DNA"/>
</dbReference>
<dbReference type="RefSeq" id="WP_003622127.1">
    <property type="nucleotide sequence ID" value="NC_008529.1"/>
</dbReference>
<dbReference type="SMR" id="Q04CW7"/>
<dbReference type="KEGG" id="lbu:LBUL_0009"/>
<dbReference type="HOGENOM" id="CLU_148710_2_2_9"/>
<dbReference type="BioCyc" id="LDEL321956:LBUL_RS00045-MONOMER"/>
<dbReference type="GO" id="GO:0022627">
    <property type="term" value="C:cytosolic small ribosomal subunit"/>
    <property type="evidence" value="ECO:0007669"/>
    <property type="project" value="TreeGrafter"/>
</dbReference>
<dbReference type="GO" id="GO:0070181">
    <property type="term" value="F:small ribosomal subunit rRNA binding"/>
    <property type="evidence" value="ECO:0007669"/>
    <property type="project" value="TreeGrafter"/>
</dbReference>
<dbReference type="GO" id="GO:0003735">
    <property type="term" value="F:structural constituent of ribosome"/>
    <property type="evidence" value="ECO:0007669"/>
    <property type="project" value="InterPro"/>
</dbReference>
<dbReference type="GO" id="GO:0006412">
    <property type="term" value="P:translation"/>
    <property type="evidence" value="ECO:0007669"/>
    <property type="project" value="UniProtKB-UniRule"/>
</dbReference>
<dbReference type="FunFam" id="4.10.640.10:FF:000003">
    <property type="entry name" value="30S ribosomal protein S18"/>
    <property type="match status" value="1"/>
</dbReference>
<dbReference type="Gene3D" id="4.10.640.10">
    <property type="entry name" value="Ribosomal protein S18"/>
    <property type="match status" value="1"/>
</dbReference>
<dbReference type="HAMAP" id="MF_00270">
    <property type="entry name" value="Ribosomal_bS18"/>
    <property type="match status" value="1"/>
</dbReference>
<dbReference type="InterPro" id="IPR001648">
    <property type="entry name" value="Ribosomal_bS18"/>
</dbReference>
<dbReference type="InterPro" id="IPR018275">
    <property type="entry name" value="Ribosomal_bS18_CS"/>
</dbReference>
<dbReference type="InterPro" id="IPR036870">
    <property type="entry name" value="Ribosomal_bS18_sf"/>
</dbReference>
<dbReference type="NCBIfam" id="TIGR00165">
    <property type="entry name" value="S18"/>
    <property type="match status" value="1"/>
</dbReference>
<dbReference type="PANTHER" id="PTHR13479">
    <property type="entry name" value="30S RIBOSOMAL PROTEIN S18"/>
    <property type="match status" value="1"/>
</dbReference>
<dbReference type="PANTHER" id="PTHR13479:SF40">
    <property type="entry name" value="SMALL RIBOSOMAL SUBUNIT PROTEIN BS18M"/>
    <property type="match status" value="1"/>
</dbReference>
<dbReference type="Pfam" id="PF01084">
    <property type="entry name" value="Ribosomal_S18"/>
    <property type="match status" value="1"/>
</dbReference>
<dbReference type="PRINTS" id="PR00974">
    <property type="entry name" value="RIBOSOMALS18"/>
</dbReference>
<dbReference type="SUPFAM" id="SSF46911">
    <property type="entry name" value="Ribosomal protein S18"/>
    <property type="match status" value="1"/>
</dbReference>
<dbReference type="PROSITE" id="PS00057">
    <property type="entry name" value="RIBOSOMAL_S18"/>
    <property type="match status" value="1"/>
</dbReference>
<comment type="function">
    <text evidence="1">Binds as a heterodimer with protein bS6 to the central domain of the 16S rRNA, where it helps stabilize the platform of the 30S subunit.</text>
</comment>
<comment type="subunit">
    <text evidence="1">Part of the 30S ribosomal subunit. Forms a tight heterodimer with protein bS6.</text>
</comment>
<comment type="similarity">
    <text evidence="1">Belongs to the bacterial ribosomal protein bS18 family.</text>
</comment>
<gene>
    <name evidence="1" type="primary">rpsR</name>
    <name type="ordered locus">LBUL_0009</name>
</gene>
<feature type="chain" id="PRO_1000003517" description="Small ribosomal subunit protein bS18">
    <location>
        <begin position="1"/>
        <end position="78"/>
    </location>
</feature>
<evidence type="ECO:0000255" key="1">
    <source>
        <dbReference type="HAMAP-Rule" id="MF_00270"/>
    </source>
</evidence>
<evidence type="ECO:0000305" key="2"/>
<protein>
    <recommendedName>
        <fullName evidence="1">Small ribosomal subunit protein bS18</fullName>
    </recommendedName>
    <alternativeName>
        <fullName evidence="2">30S ribosomal protein S18</fullName>
    </alternativeName>
</protein>
<name>RS18_LACDB</name>
<accession>Q04CW7</accession>
<organism>
    <name type="scientific">Lactobacillus delbrueckii subsp. bulgaricus (strain ATCC BAA-365 / Lb-18)</name>
    <dbReference type="NCBI Taxonomy" id="321956"/>
    <lineage>
        <taxon>Bacteria</taxon>
        <taxon>Bacillati</taxon>
        <taxon>Bacillota</taxon>
        <taxon>Bacilli</taxon>
        <taxon>Lactobacillales</taxon>
        <taxon>Lactobacillaceae</taxon>
        <taxon>Lactobacillus</taxon>
    </lineage>
</organism>
<sequence>MPQQRKGGRRRRKVDLIAANHIDYVDYKDVDLLKHFISERGKILPRRVTGTSAKNQRKVANAIKRARIMGLLPFVAED</sequence>
<keyword id="KW-0687">Ribonucleoprotein</keyword>
<keyword id="KW-0689">Ribosomal protein</keyword>
<keyword id="KW-0694">RNA-binding</keyword>
<keyword id="KW-0699">rRNA-binding</keyword>
<reference key="1">
    <citation type="journal article" date="2006" name="Proc. Natl. Acad. Sci. U.S.A.">
        <title>Comparative genomics of the lactic acid bacteria.</title>
        <authorList>
            <person name="Makarova K.S."/>
            <person name="Slesarev A."/>
            <person name="Wolf Y.I."/>
            <person name="Sorokin A."/>
            <person name="Mirkin B."/>
            <person name="Koonin E.V."/>
            <person name="Pavlov A."/>
            <person name="Pavlova N."/>
            <person name="Karamychev V."/>
            <person name="Polouchine N."/>
            <person name="Shakhova V."/>
            <person name="Grigoriev I."/>
            <person name="Lou Y."/>
            <person name="Rohksar D."/>
            <person name="Lucas S."/>
            <person name="Huang K."/>
            <person name="Goodstein D.M."/>
            <person name="Hawkins T."/>
            <person name="Plengvidhya V."/>
            <person name="Welker D."/>
            <person name="Hughes J."/>
            <person name="Goh Y."/>
            <person name="Benson A."/>
            <person name="Baldwin K."/>
            <person name="Lee J.-H."/>
            <person name="Diaz-Muniz I."/>
            <person name="Dosti B."/>
            <person name="Smeianov V."/>
            <person name="Wechter W."/>
            <person name="Barabote R."/>
            <person name="Lorca G."/>
            <person name="Altermann E."/>
            <person name="Barrangou R."/>
            <person name="Ganesan B."/>
            <person name="Xie Y."/>
            <person name="Rawsthorne H."/>
            <person name="Tamir D."/>
            <person name="Parker C."/>
            <person name="Breidt F."/>
            <person name="Broadbent J.R."/>
            <person name="Hutkins R."/>
            <person name="O'Sullivan D."/>
            <person name="Steele J."/>
            <person name="Unlu G."/>
            <person name="Saier M.H. Jr."/>
            <person name="Klaenhammer T."/>
            <person name="Richardson P."/>
            <person name="Kozyavkin S."/>
            <person name="Weimer B.C."/>
            <person name="Mills D.A."/>
        </authorList>
    </citation>
    <scope>NUCLEOTIDE SEQUENCE [LARGE SCALE GENOMIC DNA]</scope>
    <source>
        <strain>ATCC BAA-365 / Lb-18</strain>
    </source>
</reference>